<gene>
    <name evidence="1 7" type="primary">argB</name>
    <name type="ordered locus">b3959</name>
    <name type="ordered locus">JW5553</name>
</gene>
<keyword id="KW-0002">3D-structure</keyword>
<keyword id="KW-0028">Amino-acid biosynthesis</keyword>
<keyword id="KW-0055">Arginine biosynthesis</keyword>
<keyword id="KW-0067">ATP-binding</keyword>
<keyword id="KW-0963">Cytoplasm</keyword>
<keyword id="KW-0903">Direct protein sequencing</keyword>
<keyword id="KW-0418">Kinase</keyword>
<keyword id="KW-0547">Nucleotide-binding</keyword>
<keyword id="KW-1185">Reference proteome</keyword>
<keyword id="KW-0808">Transferase</keyword>
<reference key="1">
    <citation type="journal article" date="1988" name="Gene">
        <title>Nucleotide sequence of Escherichia coli argB and argC genes: comparison of N-acetylglutamate kinase and N-acetylglutamate-gamma-semialdehyde dehydrogenase with homologous and analogous enzymes.</title>
        <authorList>
            <person name="Parsot C."/>
            <person name="Boyen A."/>
            <person name="Cohen G.N."/>
            <person name="Glansdorff N."/>
        </authorList>
    </citation>
    <scope>NUCLEOTIDE SEQUENCE [GENOMIC DNA]</scope>
</reference>
<reference key="2">
    <citation type="journal article" date="1993" name="Nucleic Acids Res.">
        <title>Analysis of the Escherichia coli genome. IV. DNA sequence of the region from 89.2 to 92.8 minutes.</title>
        <authorList>
            <person name="Blattner F.R."/>
            <person name="Burland V.D."/>
            <person name="Plunkett G. III"/>
            <person name="Sofia H.J."/>
            <person name="Daniels D.L."/>
        </authorList>
    </citation>
    <scope>NUCLEOTIDE SEQUENCE [LARGE SCALE GENOMIC DNA]</scope>
    <source>
        <strain>K12 / MG1655 / ATCC 47076</strain>
    </source>
</reference>
<reference key="3">
    <citation type="journal article" date="1997" name="Science">
        <title>The complete genome sequence of Escherichia coli K-12.</title>
        <authorList>
            <person name="Blattner F.R."/>
            <person name="Plunkett G. III"/>
            <person name="Bloch C.A."/>
            <person name="Perna N.T."/>
            <person name="Burland V."/>
            <person name="Riley M."/>
            <person name="Collado-Vides J."/>
            <person name="Glasner J.D."/>
            <person name="Rode C.K."/>
            <person name="Mayhew G.F."/>
            <person name="Gregor J."/>
            <person name="Davis N.W."/>
            <person name="Kirkpatrick H.A."/>
            <person name="Goeden M.A."/>
            <person name="Rose D.J."/>
            <person name="Mau B."/>
            <person name="Shao Y."/>
        </authorList>
    </citation>
    <scope>NUCLEOTIDE SEQUENCE [LARGE SCALE GENOMIC DNA]</scope>
    <source>
        <strain>K12 / MG1655 / ATCC 47076</strain>
    </source>
</reference>
<reference key="4">
    <citation type="journal article" date="2006" name="Mol. Syst. Biol.">
        <title>Highly accurate genome sequences of Escherichia coli K-12 strains MG1655 and W3110.</title>
        <authorList>
            <person name="Hayashi K."/>
            <person name="Morooka N."/>
            <person name="Yamamoto Y."/>
            <person name="Fujita K."/>
            <person name="Isono K."/>
            <person name="Choi S."/>
            <person name="Ohtsubo E."/>
            <person name="Baba T."/>
            <person name="Wanner B.L."/>
            <person name="Mori H."/>
            <person name="Horiuchi T."/>
        </authorList>
    </citation>
    <scope>NUCLEOTIDE SEQUENCE [LARGE SCALE GENOMIC DNA]</scope>
    <source>
        <strain>K12 / W3110 / ATCC 27325 / DSM 5911</strain>
    </source>
</reference>
<reference key="5">
    <citation type="journal article" date="1999" name="Acta Crystallogr. D">
        <title>N-acetyl-L-glutamate kinase from Escherichia coli: cloning of the gene, purification and crystallization of the recombinant enzyme and preliminary X-ray analysis of the free and ligand-bound forms.</title>
        <authorList>
            <person name="Gil F."/>
            <person name="Ramon-Maiques S."/>
            <person name="Marina A."/>
            <person name="Fita I."/>
            <person name="Rubio V."/>
        </authorList>
    </citation>
    <scope>PROTEIN SEQUENCE OF 2-8</scope>
    <scope>FUNCTION</scope>
    <scope>CATALYTIC ACTIVITY</scope>
    <scope>SUBUNIT</scope>
    <scope>CRYSTALLIZATION</scope>
</reference>
<reference key="6">
    <citation type="journal article" date="2003" name="J. Mol. Biol.">
        <title>Site-directed mutagenesis of Escherichia coli acetylglutamate kinase and aspartokinase III probes the catalytic and substrate-binding mechanisms of these amino acid kinase family enzymes and allows three-dimensional modelling of aspartokinase.</title>
        <authorList>
            <person name="Marco-Marin C."/>
            <person name="Ramon-Maiques S."/>
            <person name="Tavarez S."/>
            <person name="Rubio V."/>
        </authorList>
    </citation>
    <scope>FUNCTION</scope>
    <scope>CATALYTIC ACTIVITY</scope>
    <scope>BIOPHYSICOCHEMICAL PROPERTIES</scope>
    <scope>MUTAGENESIS OF LYS-8; ARG-66; ASN-158 AND ASP-162</scope>
</reference>
<reference key="7">
    <citation type="journal article" date="2002" name="Structure">
        <title>Structure of acetylglutamate kinase, a key enzyme for arginine biosynthesis and a prototype for the amino acid kinase enzyme family, during catalysis.</title>
        <authorList>
            <person name="Ramon-Maiques S."/>
            <person name="Marina A."/>
            <person name="Gil-Ortiz F."/>
            <person name="Fita I."/>
            <person name="Rubio V."/>
        </authorList>
    </citation>
    <scope>X-RAY CRYSTALLOGRAPHY (1.5 ANGSTROMS) IN COMPLEX WITH SUBSTRATE AND ATP ANALOG</scope>
    <scope>SUBUNIT</scope>
</reference>
<reference key="8">
    <citation type="journal article" date="2003" name="J. Mol. Biol.">
        <title>The course of phosphorus in the reaction of N-acetyl-L-glutamate kinase, determined from the structures of crystalline complexes, including a complex with an AlF(4)(-) transition state mimic.</title>
        <authorList>
            <person name="Gil-Ortiz F."/>
            <person name="Ramon-Maiques S."/>
            <person name="Fita I."/>
            <person name="Rubio V."/>
        </authorList>
    </citation>
    <scope>X-RAY CRYSTALLOGRAPHY (1.90 ANGSTROMS) IN COMPLEX WITH SUBSTRATE; ATP AND TRANSITION STATE ANALOG</scope>
</reference>
<proteinExistence type="evidence at protein level"/>
<sequence length="258" mass="27160">MMNPLIIKLGGVLLDSEEALERLFSALVNYRESHQRPLVIVHGGGCVVDELMKGLNLPVKKKNGLRVTPADQIDIITGALAGTANKTLLAWAKKHQIAAVGLFLGDGDSVKVTQLDEELGHVGLAQPGSPKLINSLLENGYLPVVSSIGVTDEGQLMNVNADQAATALAATLGADLILLSDVSGILDGKGQRIAEMTAAKAEQLIEQGIITDGMIVKVNAALDAARTLGRPVDIASWRHAEQLPALFNGMPMGTRILA</sequence>
<protein>
    <recommendedName>
        <fullName evidence="1 8">Acetylglutamate kinase</fullName>
        <ecNumber evidence="1 2 5">2.7.2.8</ecNumber>
    </recommendedName>
    <alternativeName>
        <fullName evidence="1 8">N-acetyl-L-glutamate 5-phosphotransferase</fullName>
    </alternativeName>
    <alternativeName>
        <fullName evidence="1 8">NAG kinase</fullName>
        <shortName evidence="1 6">NAGK</shortName>
    </alternativeName>
</protein>
<organism>
    <name type="scientific">Escherichia coli (strain K12)</name>
    <dbReference type="NCBI Taxonomy" id="83333"/>
    <lineage>
        <taxon>Bacteria</taxon>
        <taxon>Pseudomonadati</taxon>
        <taxon>Pseudomonadota</taxon>
        <taxon>Gammaproteobacteria</taxon>
        <taxon>Enterobacterales</taxon>
        <taxon>Enterobacteriaceae</taxon>
        <taxon>Escherichia</taxon>
    </lineage>
</organism>
<accession>P0A6C8</accession>
<accession>P11445</accession>
<accession>Q2M8Q4</accession>
<name>ARGB_ECOLI</name>
<comment type="function">
    <text evidence="1 2 5">Catalyzes the ATP-dependent phosphorylation of N-acetyl-L-glutamate.</text>
</comment>
<comment type="catalytic activity">
    <reaction evidence="1 2 5">
        <text>N-acetyl-L-glutamate + ATP = N-acetyl-L-glutamyl 5-phosphate + ADP</text>
        <dbReference type="Rhea" id="RHEA:14629"/>
        <dbReference type="ChEBI" id="CHEBI:30616"/>
        <dbReference type="ChEBI" id="CHEBI:44337"/>
        <dbReference type="ChEBI" id="CHEBI:57936"/>
        <dbReference type="ChEBI" id="CHEBI:456216"/>
        <dbReference type="EC" id="2.7.2.8"/>
    </reaction>
</comment>
<comment type="biophysicochemical properties">
    <kinetics>
        <KM evidence="5">0.2 mM for N-acetyl-L-glutamate</KM>
        <KM evidence="5">0.29 mM for ATP</KM>
    </kinetics>
</comment>
<comment type="pathway">
    <text evidence="1 8">Amino-acid biosynthesis; L-arginine biosynthesis; N(2)-acetyl-L-ornithine from L-glutamate: step 2/4.</text>
</comment>
<comment type="subunit">
    <text evidence="1 2 3 4">Homodimer.</text>
</comment>
<comment type="subcellular location">
    <subcellularLocation>
        <location evidence="1">Cytoplasm</location>
    </subcellularLocation>
</comment>
<comment type="similarity">
    <text evidence="1 8">Belongs to the acetylglutamate kinase family. ArgB subfamily.</text>
</comment>
<comment type="sequence caution" evidence="8">
    <conflict type="erroneous initiation">
        <sequence resource="EMBL-CDS" id="BAE77352"/>
    </conflict>
    <text>Truncated N-terminus.</text>
</comment>
<evidence type="ECO:0000255" key="1">
    <source>
        <dbReference type="HAMAP-Rule" id="MF_00082"/>
    </source>
</evidence>
<evidence type="ECO:0000269" key="2">
    <source>
    </source>
</evidence>
<evidence type="ECO:0000269" key="3">
    <source>
    </source>
</evidence>
<evidence type="ECO:0000269" key="4">
    <source>
    </source>
</evidence>
<evidence type="ECO:0000269" key="5">
    <source>
    </source>
</evidence>
<evidence type="ECO:0000303" key="6">
    <source>
    </source>
</evidence>
<evidence type="ECO:0000303" key="7">
    <source>
    </source>
</evidence>
<evidence type="ECO:0000305" key="8"/>
<evidence type="ECO:0000305" key="9">
    <source>
    </source>
</evidence>
<evidence type="ECO:0007829" key="10">
    <source>
        <dbReference type="PDB" id="1GS5"/>
    </source>
</evidence>
<evidence type="ECO:0007829" key="11">
    <source>
        <dbReference type="PDB" id="2WXB"/>
    </source>
</evidence>
<evidence type="ECO:0007829" key="12">
    <source>
        <dbReference type="PDB" id="2X2W"/>
    </source>
</evidence>
<feature type="initiator methionine" description="Removed" evidence="2">
    <location>
        <position position="1"/>
    </location>
</feature>
<feature type="chain" id="PRO_0000112614" description="Acetylglutamate kinase">
    <location>
        <begin position="2"/>
        <end position="258"/>
    </location>
</feature>
<feature type="binding site" evidence="1 3 4">
    <location>
        <begin position="44"/>
        <end position="45"/>
    </location>
    <ligand>
        <name>substrate</name>
    </ligand>
</feature>
<feature type="binding site" evidence="1 3 4">
    <location>
        <position position="66"/>
    </location>
    <ligand>
        <name>substrate</name>
    </ligand>
</feature>
<feature type="binding site" evidence="1 3 4">
    <location>
        <position position="158"/>
    </location>
    <ligand>
        <name>substrate</name>
    </ligand>
</feature>
<feature type="binding site" evidence="1 4">
    <location>
        <begin position="181"/>
        <end position="186"/>
    </location>
    <ligand>
        <name>ATP</name>
        <dbReference type="ChEBI" id="CHEBI:30616"/>
    </ligand>
</feature>
<feature type="binding site" evidence="1 4">
    <location>
        <begin position="209"/>
        <end position="211"/>
    </location>
    <ligand>
        <name>ATP</name>
        <dbReference type="ChEBI" id="CHEBI:30616"/>
    </ligand>
</feature>
<feature type="site" description="Transition state stabilizer" evidence="1 9">
    <location>
        <position position="8"/>
    </location>
</feature>
<feature type="site" description="Transition state stabilizer" evidence="1 9">
    <location>
        <position position="217"/>
    </location>
</feature>
<feature type="mutagenesis site" description="Reduces activity 50-fold. Increases KM for N-acetyl-L-glutamate and ATP about 10-fold." evidence="5">
    <original>K</original>
    <variation>R</variation>
    <location>
        <position position="8"/>
    </location>
</feature>
<feature type="mutagenesis site" description="Increases KM for N-acetyl-L-glutamate over 1000-fold. Increases KM for ATP nearly 20-fold." evidence="5">
    <original>R</original>
    <variation>K</variation>
    <location>
        <position position="66"/>
    </location>
</feature>
<feature type="mutagenesis site" description="Increases KM for N-acetyl-L-glutamate over 1000-fold. Increases KM for ATP over 20-fold." evidence="5">
    <original>N</original>
    <variation>Q</variation>
    <location>
        <position position="158"/>
    </location>
</feature>
<feature type="mutagenesis site" description="Reduces activity over 99%. No effect on KM for N-acetyl-L-glutamate and ATP." evidence="5">
    <original>D</original>
    <variation>E</variation>
    <location>
        <position position="162"/>
    </location>
</feature>
<feature type="strand" evidence="10">
    <location>
        <begin position="5"/>
        <end position="9"/>
    </location>
</feature>
<feature type="helix" evidence="10">
    <location>
        <begin position="11"/>
        <end position="15"/>
    </location>
</feature>
<feature type="helix" evidence="10">
    <location>
        <begin position="17"/>
        <end position="31"/>
    </location>
</feature>
<feature type="strand" evidence="10">
    <location>
        <begin position="38"/>
        <end position="42"/>
    </location>
</feature>
<feature type="helix" evidence="10">
    <location>
        <begin position="45"/>
        <end position="55"/>
    </location>
</feature>
<feature type="strand" evidence="12">
    <location>
        <begin position="61"/>
        <end position="66"/>
    </location>
</feature>
<feature type="helix" evidence="10">
    <location>
        <begin position="70"/>
        <end position="81"/>
    </location>
</feature>
<feature type="helix" evidence="10">
    <location>
        <begin position="83"/>
        <end position="94"/>
    </location>
</feature>
<feature type="strand" evidence="10">
    <location>
        <begin position="99"/>
        <end position="102"/>
    </location>
</feature>
<feature type="helix" evidence="10">
    <location>
        <begin position="106"/>
        <end position="108"/>
    </location>
</feature>
<feature type="strand" evidence="10">
    <location>
        <begin position="110"/>
        <end position="114"/>
    </location>
</feature>
<feature type="helix" evidence="10">
    <location>
        <begin position="117"/>
        <end position="119"/>
    </location>
</feature>
<feature type="strand" evidence="10">
    <location>
        <begin position="120"/>
        <end position="127"/>
    </location>
</feature>
<feature type="helix" evidence="10">
    <location>
        <begin position="131"/>
        <end position="138"/>
    </location>
</feature>
<feature type="strand" evidence="10">
    <location>
        <begin position="142"/>
        <end position="145"/>
    </location>
</feature>
<feature type="strand" evidence="10">
    <location>
        <begin position="147"/>
        <end position="150"/>
    </location>
</feature>
<feature type="strand" evidence="10">
    <location>
        <begin position="156"/>
        <end position="158"/>
    </location>
</feature>
<feature type="helix" evidence="10">
    <location>
        <begin position="161"/>
        <end position="172"/>
    </location>
</feature>
<feature type="strand" evidence="10">
    <location>
        <begin position="175"/>
        <end position="184"/>
    </location>
</feature>
<feature type="strand" evidence="11">
    <location>
        <begin position="194"/>
        <end position="197"/>
    </location>
</feature>
<feature type="helix" evidence="10">
    <location>
        <begin position="198"/>
        <end position="206"/>
    </location>
</feature>
<feature type="helix" evidence="10">
    <location>
        <begin position="213"/>
        <end position="228"/>
    </location>
</feature>
<feature type="strand" evidence="10">
    <location>
        <begin position="232"/>
        <end position="238"/>
    </location>
</feature>
<feature type="helix" evidence="10">
    <location>
        <begin position="240"/>
        <end position="242"/>
    </location>
</feature>
<feature type="helix" evidence="10">
    <location>
        <begin position="243"/>
        <end position="247"/>
    </location>
</feature>
<feature type="strand" evidence="10">
    <location>
        <begin position="252"/>
        <end position="256"/>
    </location>
</feature>
<dbReference type="EC" id="2.7.2.8" evidence="1 2 5"/>
<dbReference type="EMBL" id="M21446">
    <property type="protein sequence ID" value="AAA23478.1"/>
    <property type="molecule type" value="Genomic_DNA"/>
</dbReference>
<dbReference type="EMBL" id="U00006">
    <property type="protein sequence ID" value="AAC43065.1"/>
    <property type="molecule type" value="Genomic_DNA"/>
</dbReference>
<dbReference type="EMBL" id="U00096">
    <property type="protein sequence ID" value="AAC76941.3"/>
    <property type="molecule type" value="Genomic_DNA"/>
</dbReference>
<dbReference type="EMBL" id="AP009048">
    <property type="protein sequence ID" value="BAE77352.1"/>
    <property type="status" value="ALT_INIT"/>
    <property type="molecule type" value="Genomic_DNA"/>
</dbReference>
<dbReference type="PIR" id="JT0331">
    <property type="entry name" value="KIECAE"/>
</dbReference>
<dbReference type="RefSeq" id="NP_418394.3">
    <property type="nucleotide sequence ID" value="NC_000913.3"/>
</dbReference>
<dbReference type="RefSeq" id="WP_001302318.1">
    <property type="nucleotide sequence ID" value="NZ_STEB01000037.1"/>
</dbReference>
<dbReference type="PDB" id="1GS5">
    <property type="method" value="X-ray"/>
    <property type="resolution" value="1.50 A"/>
    <property type="chains" value="A=1-258"/>
</dbReference>
<dbReference type="PDB" id="1GSJ">
    <property type="method" value="X-ray"/>
    <property type="resolution" value="1.85 A"/>
    <property type="chains" value="A=1-258"/>
</dbReference>
<dbReference type="PDB" id="1OH9">
    <property type="method" value="X-ray"/>
    <property type="resolution" value="1.91 A"/>
    <property type="chains" value="A=1-258"/>
</dbReference>
<dbReference type="PDB" id="1OHA">
    <property type="method" value="X-ray"/>
    <property type="resolution" value="1.90 A"/>
    <property type="chains" value="A=1-258"/>
</dbReference>
<dbReference type="PDB" id="1OHB">
    <property type="method" value="X-ray"/>
    <property type="resolution" value="1.90 A"/>
    <property type="chains" value="A=1-258"/>
</dbReference>
<dbReference type="PDB" id="2WXB">
    <property type="method" value="X-ray"/>
    <property type="resolution" value="2.00 A"/>
    <property type="chains" value="A/B=1-258"/>
</dbReference>
<dbReference type="PDB" id="2X2W">
    <property type="method" value="X-ray"/>
    <property type="resolution" value="2.00 A"/>
    <property type="chains" value="A/B=1-258"/>
</dbReference>
<dbReference type="PDBsum" id="1GS5"/>
<dbReference type="PDBsum" id="1GSJ"/>
<dbReference type="PDBsum" id="1OH9"/>
<dbReference type="PDBsum" id="1OHA"/>
<dbReference type="PDBsum" id="1OHB"/>
<dbReference type="PDBsum" id="2WXB"/>
<dbReference type="PDBsum" id="2X2W"/>
<dbReference type="SMR" id="P0A6C8"/>
<dbReference type="BioGRID" id="4261889">
    <property type="interactions" value="9"/>
</dbReference>
<dbReference type="DIP" id="DIP-9136N"/>
<dbReference type="FunCoup" id="P0A6C8">
    <property type="interactions" value="440"/>
</dbReference>
<dbReference type="IntAct" id="P0A6C8">
    <property type="interactions" value="2"/>
</dbReference>
<dbReference type="STRING" id="511145.b3959"/>
<dbReference type="DrugBank" id="DB04075">
    <property type="generic name" value="N-Acetyl-L-Glutamate"/>
</dbReference>
<dbReference type="DrugBank" id="DB04395">
    <property type="generic name" value="Phosphoaminophosphonic Acid-Adenylate Ester"/>
</dbReference>
<dbReference type="DrugBank" id="DB04444">
    <property type="generic name" value="Tetrafluoroaluminate Ion"/>
</dbReference>
<dbReference type="jPOST" id="P0A6C8"/>
<dbReference type="PaxDb" id="511145-b3959"/>
<dbReference type="EnsemblBacteria" id="AAC76941">
    <property type="protein sequence ID" value="AAC76941"/>
    <property type="gene ID" value="b3959"/>
</dbReference>
<dbReference type="GeneID" id="75203211"/>
<dbReference type="GeneID" id="948464"/>
<dbReference type="KEGG" id="ecj:JW5553"/>
<dbReference type="KEGG" id="eco:b3959"/>
<dbReference type="PATRIC" id="fig|1411691.4.peg.2746"/>
<dbReference type="EchoBASE" id="EB0062"/>
<dbReference type="eggNOG" id="COG0548">
    <property type="taxonomic scope" value="Bacteria"/>
</dbReference>
<dbReference type="HOGENOM" id="CLU_053680_1_1_6"/>
<dbReference type="InParanoid" id="P0A6C8"/>
<dbReference type="OMA" id="EGLYEDW"/>
<dbReference type="OrthoDB" id="5915023at2"/>
<dbReference type="PhylomeDB" id="P0A6C8"/>
<dbReference type="BioCyc" id="EcoCyc:ACETYLGLUTKIN-MONOMER"/>
<dbReference type="BioCyc" id="MetaCyc:ACETYLGLUTKIN-MONOMER"/>
<dbReference type="BRENDA" id="2.7.2.8">
    <property type="organism ID" value="2026"/>
</dbReference>
<dbReference type="SABIO-RK" id="P0A6C8"/>
<dbReference type="UniPathway" id="UPA00068">
    <property type="reaction ID" value="UER00107"/>
</dbReference>
<dbReference type="EvolutionaryTrace" id="P0A6C8"/>
<dbReference type="PRO" id="PR:P0A6C8"/>
<dbReference type="Proteomes" id="UP000000625">
    <property type="component" value="Chromosome"/>
</dbReference>
<dbReference type="GO" id="GO:0005737">
    <property type="term" value="C:cytoplasm"/>
    <property type="evidence" value="ECO:0007669"/>
    <property type="project" value="UniProtKB-SubCell"/>
</dbReference>
<dbReference type="GO" id="GO:0003991">
    <property type="term" value="F:acetylglutamate kinase activity"/>
    <property type="evidence" value="ECO:0000314"/>
    <property type="project" value="EcoCyc"/>
</dbReference>
<dbReference type="GO" id="GO:0005524">
    <property type="term" value="F:ATP binding"/>
    <property type="evidence" value="ECO:0007669"/>
    <property type="project" value="UniProtKB-UniRule"/>
</dbReference>
<dbReference type="GO" id="GO:0042450">
    <property type="term" value="P:arginine biosynthetic process via ornithine"/>
    <property type="evidence" value="ECO:0007669"/>
    <property type="project" value="UniProtKB-UniRule"/>
</dbReference>
<dbReference type="GO" id="GO:0006974">
    <property type="term" value="P:DNA damage response"/>
    <property type="evidence" value="ECO:0000270"/>
    <property type="project" value="EcoliWiki"/>
</dbReference>
<dbReference type="GO" id="GO:0006526">
    <property type="term" value="P:L-arginine biosynthetic process"/>
    <property type="evidence" value="ECO:0000314"/>
    <property type="project" value="EcoCyc"/>
</dbReference>
<dbReference type="CDD" id="cd04249">
    <property type="entry name" value="AAK_NAGK-NC"/>
    <property type="match status" value="1"/>
</dbReference>
<dbReference type="FunFam" id="3.40.1160.10:FF:000008">
    <property type="entry name" value="Acetylglutamate kinase"/>
    <property type="match status" value="1"/>
</dbReference>
<dbReference type="Gene3D" id="3.40.1160.10">
    <property type="entry name" value="Acetylglutamate kinase-like"/>
    <property type="match status" value="1"/>
</dbReference>
<dbReference type="HAMAP" id="MF_00082">
    <property type="entry name" value="ArgB"/>
    <property type="match status" value="1"/>
</dbReference>
<dbReference type="InterPro" id="IPR036393">
    <property type="entry name" value="AceGlu_kinase-like_sf"/>
</dbReference>
<dbReference type="InterPro" id="IPR004662">
    <property type="entry name" value="AcgluKinase_fam"/>
</dbReference>
<dbReference type="InterPro" id="IPR037528">
    <property type="entry name" value="ArgB"/>
</dbReference>
<dbReference type="InterPro" id="IPR001048">
    <property type="entry name" value="Asp/Glu/Uridylate_kinase"/>
</dbReference>
<dbReference type="InterPro" id="IPR041731">
    <property type="entry name" value="NAGK-NC"/>
</dbReference>
<dbReference type="NCBIfam" id="TIGR00761">
    <property type="entry name" value="argB"/>
    <property type="match status" value="1"/>
</dbReference>
<dbReference type="PANTHER" id="PTHR23342">
    <property type="entry name" value="N-ACETYLGLUTAMATE SYNTHASE"/>
    <property type="match status" value="1"/>
</dbReference>
<dbReference type="PANTHER" id="PTHR23342:SF0">
    <property type="entry name" value="N-ACETYLGLUTAMATE SYNTHASE, MITOCHONDRIAL"/>
    <property type="match status" value="1"/>
</dbReference>
<dbReference type="Pfam" id="PF00696">
    <property type="entry name" value="AA_kinase"/>
    <property type="match status" value="1"/>
</dbReference>
<dbReference type="PIRSF" id="PIRSF000728">
    <property type="entry name" value="NAGK"/>
    <property type="match status" value="1"/>
</dbReference>
<dbReference type="SUPFAM" id="SSF53633">
    <property type="entry name" value="Carbamate kinase-like"/>
    <property type="match status" value="1"/>
</dbReference>